<proteinExistence type="evidence at transcript level"/>
<keyword id="KW-0125">Carotenoid biosynthesis</keyword>
<keyword id="KW-0150">Chloroplast</keyword>
<keyword id="KW-0957">Chromoplast</keyword>
<keyword id="KW-0274">FAD</keyword>
<keyword id="KW-0285">Flavoprotein</keyword>
<keyword id="KW-0472">Membrane</keyword>
<keyword id="KW-0560">Oxidoreductase</keyword>
<keyword id="KW-0934">Plastid</keyword>
<keyword id="KW-1185">Reference proteome</keyword>
<keyword id="KW-0809">Transit peptide</keyword>
<gene>
    <name type="primary">PDS1</name>
    <name type="synonym">PDS</name>
</gene>
<organism>
    <name type="scientific">Zea mays</name>
    <name type="common">Maize</name>
    <dbReference type="NCBI Taxonomy" id="4577"/>
    <lineage>
        <taxon>Eukaryota</taxon>
        <taxon>Viridiplantae</taxon>
        <taxon>Streptophyta</taxon>
        <taxon>Embryophyta</taxon>
        <taxon>Tracheophyta</taxon>
        <taxon>Spermatophyta</taxon>
        <taxon>Magnoliopsida</taxon>
        <taxon>Liliopsida</taxon>
        <taxon>Poales</taxon>
        <taxon>Poaceae</taxon>
        <taxon>PACMAD clade</taxon>
        <taxon>Panicoideae</taxon>
        <taxon>Andropogonodae</taxon>
        <taxon>Andropogoneae</taxon>
        <taxon>Tripsacinae</taxon>
        <taxon>Zea</taxon>
    </lineage>
</organism>
<sequence length="571" mass="64116">MDTGCLSSMNITGASQTRSFAGQLPPQRCFASSHYTSFAVKKLVSRNKGRRSHRRHPALQVVCKDFPRPPLESTINYLEAGQLSSFFRNSERPSKPLQVVVAGAGLAGLSTAKYLADAGHKPILLEARDVLGGKVAAWKDEDGDWYETGLHIFFGAYPNIQNLFGELRIEDRLQWKEHSMIFAMPNKPGEFSRFDFPETLPAPINGIWAILRNNEMLTWPEKVKFAIGLLPAMVGGQPYVEAQDGLTVSEWMKKQGVPDRVNDEVFIAMSKALNFINPDELSMQCILIALNRFLQEKHGSKMAFLDGNPPERLCMPIVDHIRSRGGEVRLNSRIKKIELNPDGTVKHFALSDGTQITGDAYVCATPVDIFKLLVPQEWSEITYFKKLEKLVGVPVINVHIWFDRKLNNTYDHLLFSRSSLLSVYADMSVTCKEYYDPNRSMLELVFAPADEWIGRSDTEIIDATMEELAKLFPDEIAADQSKAKILKYHIVKTPRSVYKTVPNCEPCRPLQRSPIEGFYLAGDYTKQKYLASMEGAVLSGKLCAQSIVQDYSRLALRSQKSLQSGEVPVPS</sequence>
<comment type="function">
    <text evidence="1">Converts phytoene into zeta-carotene via the intermediary of phytofluene by the symmetrical introduction of two double bonds at the C-11 and C-11' positions of phytoene with a concomitant isomerization of two neighboring double bonds at the C9 and C9' positions from trans to cis.</text>
</comment>
<comment type="catalytic activity">
    <reaction evidence="1">
        <text>2 a plastoquinone + 15-cis-phytoene = 9,9',15-tri-cis-zeta-carotene + 2 a plastoquinol</text>
        <dbReference type="Rhea" id="RHEA:30287"/>
        <dbReference type="Rhea" id="RHEA-COMP:9561"/>
        <dbReference type="Rhea" id="RHEA-COMP:9562"/>
        <dbReference type="ChEBI" id="CHEBI:17757"/>
        <dbReference type="ChEBI" id="CHEBI:27787"/>
        <dbReference type="ChEBI" id="CHEBI:48717"/>
        <dbReference type="ChEBI" id="CHEBI:62192"/>
        <dbReference type="EC" id="1.3.5.5"/>
    </reaction>
</comment>
<comment type="cofactor">
    <cofactor evidence="1">
        <name>FAD</name>
        <dbReference type="ChEBI" id="CHEBI:57692"/>
    </cofactor>
</comment>
<comment type="pathway">
    <text>Carotenoid biosynthesis; lycopene biosynthesis.</text>
</comment>
<comment type="subunit">
    <text evidence="1">Homotetramer.</text>
</comment>
<comment type="subcellular location">
    <subcellularLocation>
        <location evidence="2">Plastid</location>
        <location evidence="2">Chloroplast</location>
    </subcellularLocation>
    <subcellularLocation>
        <location evidence="2">Plastid</location>
        <location evidence="2">Chromoplast</location>
    </subcellularLocation>
    <subcellularLocation>
        <location evidence="1">Membrane</location>
        <topology evidence="1">Peripheral membrane protein</topology>
    </subcellularLocation>
</comment>
<comment type="similarity">
    <text evidence="4">Belongs to the carotenoid/retinoid oxidoreductase family.</text>
</comment>
<accession>P49086</accession>
<accession>Q41849</accession>
<dbReference type="EC" id="1.3.5.5" evidence="1"/>
<dbReference type="EMBL" id="U37285">
    <property type="protein sequence ID" value="AAC12846.1"/>
    <property type="molecule type" value="mRNA"/>
</dbReference>
<dbReference type="EMBL" id="L39266">
    <property type="protein sequence ID" value="AAA99519.1"/>
    <property type="molecule type" value="mRNA"/>
</dbReference>
<dbReference type="PIR" id="S65060">
    <property type="entry name" value="S65060"/>
</dbReference>
<dbReference type="RefSeq" id="NP_001105381.1">
    <property type="nucleotide sequence ID" value="NM_001111911.1"/>
</dbReference>
<dbReference type="SMR" id="P49086"/>
<dbReference type="FunCoup" id="P49086">
    <property type="interactions" value="1200"/>
</dbReference>
<dbReference type="STRING" id="4577.P49086"/>
<dbReference type="PaxDb" id="4577-GRMZM2G410515_P01"/>
<dbReference type="MaizeGDB" id="84977"/>
<dbReference type="eggNOG" id="KOG0029">
    <property type="taxonomic scope" value="Eukaryota"/>
</dbReference>
<dbReference type="InParanoid" id="P49086"/>
<dbReference type="BRENDA" id="1.3.5.5">
    <property type="organism ID" value="6752"/>
</dbReference>
<dbReference type="UniPathway" id="UPA00803"/>
<dbReference type="Proteomes" id="UP000007305">
    <property type="component" value="Unplaced"/>
</dbReference>
<dbReference type="ExpressionAtlas" id="P49086">
    <property type="expression patterns" value="baseline and differential"/>
</dbReference>
<dbReference type="GO" id="GO:0009507">
    <property type="term" value="C:chloroplast"/>
    <property type="evidence" value="ECO:0000250"/>
    <property type="project" value="UniProtKB"/>
</dbReference>
<dbReference type="GO" id="GO:0009509">
    <property type="term" value="C:chromoplast"/>
    <property type="evidence" value="ECO:0000250"/>
    <property type="project" value="UniProtKB"/>
</dbReference>
<dbReference type="GO" id="GO:0016020">
    <property type="term" value="C:membrane"/>
    <property type="evidence" value="ECO:0007669"/>
    <property type="project" value="UniProtKB-SubCell"/>
</dbReference>
<dbReference type="GO" id="GO:0071949">
    <property type="term" value="F:FAD binding"/>
    <property type="evidence" value="ECO:0000250"/>
    <property type="project" value="UniProtKB"/>
</dbReference>
<dbReference type="GO" id="GO:0016166">
    <property type="term" value="F:phytoene dehydrogenase activity"/>
    <property type="evidence" value="ECO:0000250"/>
    <property type="project" value="UniProtKB"/>
</dbReference>
<dbReference type="GO" id="GO:0016120">
    <property type="term" value="P:carotene biosynthetic process"/>
    <property type="evidence" value="ECO:0000250"/>
    <property type="project" value="UniProtKB"/>
</dbReference>
<dbReference type="GO" id="GO:0016117">
    <property type="term" value="P:carotenoid biosynthetic process"/>
    <property type="evidence" value="ECO:0000318"/>
    <property type="project" value="GO_Central"/>
</dbReference>
<dbReference type="GO" id="GO:0051289">
    <property type="term" value="P:protein homotetramerization"/>
    <property type="evidence" value="ECO:0000250"/>
    <property type="project" value="UniProtKB"/>
</dbReference>
<dbReference type="FunFam" id="3.50.50.60:FF:000091">
    <property type="entry name" value="15-cis-phytoene desaturase, chloroplastic/chromoplastic"/>
    <property type="match status" value="1"/>
</dbReference>
<dbReference type="Gene3D" id="3.50.50.60">
    <property type="entry name" value="FAD/NAD(P)-binding domain"/>
    <property type="match status" value="1"/>
</dbReference>
<dbReference type="InterPro" id="IPR002937">
    <property type="entry name" value="Amino_oxidase"/>
</dbReference>
<dbReference type="InterPro" id="IPR036188">
    <property type="entry name" value="FAD/NAD-bd_sf"/>
</dbReference>
<dbReference type="InterPro" id="IPR014102">
    <property type="entry name" value="Phytoene_desaturase"/>
</dbReference>
<dbReference type="InterPro" id="IPR050464">
    <property type="entry name" value="Zeta_carotene_desat/Oxidored"/>
</dbReference>
<dbReference type="NCBIfam" id="TIGR02731">
    <property type="entry name" value="phytoene_desat"/>
    <property type="match status" value="1"/>
</dbReference>
<dbReference type="PANTHER" id="PTHR42923:SF45">
    <property type="entry name" value="15-CIS-PHYTOENE DESATURASE, CHLOROPLASTIC_CHROMOPLASTIC"/>
    <property type="match status" value="1"/>
</dbReference>
<dbReference type="PANTHER" id="PTHR42923">
    <property type="entry name" value="PROTOPORPHYRINOGEN OXIDASE"/>
    <property type="match status" value="1"/>
</dbReference>
<dbReference type="Pfam" id="PF01593">
    <property type="entry name" value="Amino_oxidase"/>
    <property type="match status" value="1"/>
</dbReference>
<dbReference type="SUPFAM" id="SSF51905">
    <property type="entry name" value="FAD/NAD(P)-binding domain"/>
    <property type="match status" value="1"/>
</dbReference>
<name>PDS_MAIZE</name>
<feature type="transit peptide" description="Chloroplast and chromoplast" evidence="3">
    <location>
        <begin position="1"/>
        <end position="96"/>
    </location>
</feature>
<feature type="chain" id="PRO_0000006325" description="15-cis-phytoene desaturase, chloroplastic/chromoplastic">
    <location>
        <begin position="97"/>
        <end position="571"/>
    </location>
</feature>
<feature type="binding site" evidence="1">
    <location>
        <position position="107"/>
    </location>
    <ligand>
        <name>FAD</name>
        <dbReference type="ChEBI" id="CHEBI:57692"/>
    </ligand>
</feature>
<feature type="binding site" evidence="1">
    <location>
        <begin position="126"/>
        <end position="127"/>
    </location>
    <ligand>
        <name>FAD</name>
        <dbReference type="ChEBI" id="CHEBI:57692"/>
    </ligand>
</feature>
<feature type="binding site" evidence="1">
    <location>
        <position position="134"/>
    </location>
    <ligand>
        <name>FAD</name>
        <dbReference type="ChEBI" id="CHEBI:57692"/>
    </ligand>
</feature>
<feature type="binding site" evidence="1">
    <location>
        <begin position="151"/>
        <end position="152"/>
    </location>
    <ligand>
        <name>FAD</name>
        <dbReference type="ChEBI" id="CHEBI:57692"/>
    </ligand>
</feature>
<feature type="binding site" evidence="1">
    <location>
        <position position="157"/>
    </location>
    <ligand>
        <name>FAD</name>
        <dbReference type="ChEBI" id="CHEBI:57692"/>
    </ligand>
</feature>
<feature type="binding site" evidence="1">
    <location>
        <position position="292"/>
    </location>
    <ligand>
        <name>substrate</name>
    </ligand>
</feature>
<feature type="binding site" evidence="1">
    <location>
        <position position="334"/>
    </location>
    <ligand>
        <name>FAD</name>
        <dbReference type="ChEBI" id="CHEBI:57692"/>
    </ligand>
</feature>
<feature type="binding site" evidence="1">
    <location>
        <position position="523"/>
    </location>
    <ligand>
        <name>FAD</name>
        <dbReference type="ChEBI" id="CHEBI:57692"/>
    </ligand>
</feature>
<feature type="binding site" evidence="1">
    <location>
        <position position="531"/>
    </location>
    <ligand>
        <name>substrate</name>
    </ligand>
</feature>
<feature type="binding site" evidence="1">
    <location>
        <position position="533"/>
    </location>
    <ligand>
        <name>FAD</name>
        <dbReference type="ChEBI" id="CHEBI:57692"/>
    </ligand>
</feature>
<feature type="sequence conflict" description="In Ref. 2; AAA99519." evidence="4" ref="2">
    <original>VVC</original>
    <variation>LSA</variation>
    <location>
        <begin position="61"/>
        <end position="63"/>
    </location>
</feature>
<feature type="sequence conflict" description="In Ref. 2; AAA99519." evidence="4" ref="2">
    <original>R</original>
    <variation>S</variation>
    <location>
        <position position="68"/>
    </location>
</feature>
<feature type="sequence conflict" description="In Ref. 2; AAA99519." evidence="4" ref="2">
    <original>A</original>
    <variation>T</variation>
    <location>
        <position position="555"/>
    </location>
</feature>
<protein>
    <recommendedName>
        <fullName evidence="4">15-cis-phytoene desaturase, chloroplastic/chromoplastic</fullName>
        <ecNumber evidence="1">1.3.5.5</ecNumber>
    </recommendedName>
    <alternativeName>
        <fullName evidence="4">Phytoene dehydrogenase</fullName>
    </alternativeName>
    <alternativeName>
        <fullName evidence="4">Phytoene desaturase</fullName>
    </alternativeName>
</protein>
<reference key="1">
    <citation type="journal article" date="1996" name="Plant Mol. Biol.">
        <title>Cloning and characterization of a maize cDNA encoding phytoene desaturase, an enzyme of the carotenoid biosynthetic pathway.</title>
        <authorList>
            <person name="Li Z."/>
            <person name="Matthews P.D."/>
            <person name="Burr B."/>
            <person name="Wurtzel E.T."/>
        </authorList>
    </citation>
    <scope>NUCLEOTIDE SEQUENCE [MRNA]</scope>
</reference>
<reference key="2">
    <citation type="journal article" date="1995" name="Plant Physiol.">
        <title>Maize phytoene desaturase maps near the viviparous5 locus.</title>
        <authorList>
            <person name="Hable W.E."/>
            <person name="Oishi K.K."/>
        </authorList>
    </citation>
    <scope>NUCLEOTIDE SEQUENCE [MRNA]</scope>
    <source>
        <strain>cv. Funk F</strain>
        <tissue>Leaf</tissue>
    </source>
</reference>
<evidence type="ECO:0000250" key="1">
    <source>
        <dbReference type="UniProtKB" id="A2XDA1"/>
    </source>
</evidence>
<evidence type="ECO:0000250" key="2">
    <source>
        <dbReference type="UniProtKB" id="Q40406"/>
    </source>
</evidence>
<evidence type="ECO:0000255" key="3"/>
<evidence type="ECO:0000305" key="4"/>